<protein>
    <recommendedName>
        <fullName evidence="2">C6 finger domain transcription factor nscR</fullName>
    </recommendedName>
    <alternativeName>
        <fullName evidence="2">Neosartiricin B biosynthesis protein R</fullName>
    </alternativeName>
</protein>
<reference key="1">
    <citation type="journal article" date="2012" name="MBio">
        <title>Comparative genome analysis of Trichophyton rubrum and related dermatophytes reveals candidate genes involved in infection.</title>
        <authorList>
            <person name="Martinez D.A."/>
            <person name="Oliver B.G."/>
            <person name="Graeser Y."/>
            <person name="Goldberg J.M."/>
            <person name="Li W."/>
            <person name="Martinez-Rossi N.M."/>
            <person name="Monod M."/>
            <person name="Shelest E."/>
            <person name="Barton R.C."/>
            <person name="Birch E."/>
            <person name="Brakhage A.A."/>
            <person name="Chen Z."/>
            <person name="Gurr S.J."/>
            <person name="Heiman D."/>
            <person name="Heitman J."/>
            <person name="Kosti I."/>
            <person name="Rossi A."/>
            <person name="Saif S."/>
            <person name="Samalova M."/>
            <person name="Saunders C.W."/>
            <person name="Shea T."/>
            <person name="Summerbell R.C."/>
            <person name="Xu J."/>
            <person name="Young S."/>
            <person name="Zeng Q."/>
            <person name="Birren B.W."/>
            <person name="Cuomo C.A."/>
            <person name="White T.C."/>
        </authorList>
    </citation>
    <scope>NUCLEOTIDE SEQUENCE [LARGE SCALE GENOMIC DNA]</scope>
    <source>
        <strain>ATCC MYA-4604 / CBS 118893</strain>
    </source>
</reference>
<reference key="2">
    <citation type="journal article" date="2013" name="ACS Synth. Biol.">
        <title>Discovery of cryptic polyketide metabolites from dermatophytes using heterologous expression in Aspergillus nidulans.</title>
        <authorList>
            <person name="Yin W.B."/>
            <person name="Chooi Y.H."/>
            <person name="Smith A.R."/>
            <person name="Cacho R.A."/>
            <person name="Hu Y."/>
            <person name="White T.C."/>
            <person name="Tang Y."/>
        </authorList>
    </citation>
    <scope>FUNCTION</scope>
</reference>
<keyword id="KW-0238">DNA-binding</keyword>
<keyword id="KW-0479">Metal-binding</keyword>
<keyword id="KW-0539">Nucleus</keyword>
<keyword id="KW-1185">Reference proteome</keyword>
<keyword id="KW-0804">Transcription</keyword>
<keyword id="KW-0805">Transcription regulation</keyword>
<keyword id="KW-0862">Zinc</keyword>
<accession>E4V2N6</accession>
<dbReference type="EMBL" id="DS989827">
    <property type="protein sequence ID" value="EFR03598.1"/>
    <property type="molecule type" value="Genomic_DNA"/>
</dbReference>
<dbReference type="RefSeq" id="XP_003170606.1">
    <property type="nucleotide sequence ID" value="XM_003170558.1"/>
</dbReference>
<dbReference type="STRING" id="535722.E4V2N6"/>
<dbReference type="GeneID" id="10025845"/>
<dbReference type="VEuPathDB" id="FungiDB:MGYG_06592"/>
<dbReference type="eggNOG" id="ENOG502SHJA">
    <property type="taxonomic scope" value="Eukaryota"/>
</dbReference>
<dbReference type="HOGENOM" id="CLU_004083_7_1_1"/>
<dbReference type="InParanoid" id="E4V2N6"/>
<dbReference type="OMA" id="LMHTDPR"/>
<dbReference type="OrthoDB" id="435881at2759"/>
<dbReference type="Proteomes" id="UP000002669">
    <property type="component" value="Unassembled WGS sequence"/>
</dbReference>
<dbReference type="GO" id="GO:0005634">
    <property type="term" value="C:nucleus"/>
    <property type="evidence" value="ECO:0007669"/>
    <property type="project" value="UniProtKB-SubCell"/>
</dbReference>
<dbReference type="GO" id="GO:0003677">
    <property type="term" value="F:DNA binding"/>
    <property type="evidence" value="ECO:0007669"/>
    <property type="project" value="UniProtKB-KW"/>
</dbReference>
<dbReference type="GO" id="GO:0000981">
    <property type="term" value="F:DNA-binding transcription factor activity, RNA polymerase II-specific"/>
    <property type="evidence" value="ECO:0007669"/>
    <property type="project" value="InterPro"/>
</dbReference>
<dbReference type="GO" id="GO:0008270">
    <property type="term" value="F:zinc ion binding"/>
    <property type="evidence" value="ECO:0007669"/>
    <property type="project" value="InterPro"/>
</dbReference>
<dbReference type="GO" id="GO:0006351">
    <property type="term" value="P:DNA-templated transcription"/>
    <property type="evidence" value="ECO:0007669"/>
    <property type="project" value="InterPro"/>
</dbReference>
<dbReference type="CDD" id="cd12148">
    <property type="entry name" value="fungal_TF_MHR"/>
    <property type="match status" value="1"/>
</dbReference>
<dbReference type="CDD" id="cd00067">
    <property type="entry name" value="GAL4"/>
    <property type="match status" value="1"/>
</dbReference>
<dbReference type="Gene3D" id="4.10.240.10">
    <property type="entry name" value="Zn(2)-C6 fungal-type DNA-binding domain"/>
    <property type="match status" value="1"/>
</dbReference>
<dbReference type="InterPro" id="IPR050613">
    <property type="entry name" value="Sec_Metabolite_Reg"/>
</dbReference>
<dbReference type="InterPro" id="IPR007219">
    <property type="entry name" value="Transcription_factor_dom_fun"/>
</dbReference>
<dbReference type="InterPro" id="IPR036864">
    <property type="entry name" value="Zn2-C6_fun-type_DNA-bd_sf"/>
</dbReference>
<dbReference type="InterPro" id="IPR001138">
    <property type="entry name" value="Zn2Cys6_DnaBD"/>
</dbReference>
<dbReference type="PANTHER" id="PTHR31001">
    <property type="entry name" value="UNCHARACTERIZED TRANSCRIPTIONAL REGULATORY PROTEIN"/>
    <property type="match status" value="1"/>
</dbReference>
<dbReference type="PANTHER" id="PTHR31001:SF50">
    <property type="entry name" value="ZN(II)2CYS6 TRANSCRIPTION FACTOR (EUROFUNG)"/>
    <property type="match status" value="1"/>
</dbReference>
<dbReference type="Pfam" id="PF04082">
    <property type="entry name" value="Fungal_trans"/>
    <property type="match status" value="1"/>
</dbReference>
<dbReference type="Pfam" id="PF00172">
    <property type="entry name" value="Zn_clus"/>
    <property type="match status" value="1"/>
</dbReference>
<dbReference type="SMART" id="SM00066">
    <property type="entry name" value="GAL4"/>
    <property type="match status" value="1"/>
</dbReference>
<dbReference type="SUPFAM" id="SSF57701">
    <property type="entry name" value="Zn2/Cys6 DNA-binding domain"/>
    <property type="match status" value="1"/>
</dbReference>
<dbReference type="PROSITE" id="PS00463">
    <property type="entry name" value="ZN2_CY6_FUNGAL_1"/>
    <property type="match status" value="1"/>
</dbReference>
<dbReference type="PROSITE" id="PS50048">
    <property type="entry name" value="ZN2_CY6_FUNGAL_2"/>
    <property type="match status" value="1"/>
</dbReference>
<gene>
    <name evidence="2" type="primary">nscR</name>
    <name type="ORF">MGYG_06592</name>
</gene>
<proteinExistence type="inferred from homology"/>
<evidence type="ECO:0000255" key="1">
    <source>
        <dbReference type="PROSITE-ProRule" id="PRU00227"/>
    </source>
</evidence>
<evidence type="ECO:0000303" key="2">
    <source>
    </source>
</evidence>
<evidence type="ECO:0000305" key="3">
    <source>
    </source>
</evidence>
<sequence length="701" mass="77337">MEKRGQKRRQPTAHLSCELCRERKVKCDKLDPCTNCASAGVVCIPVRRPRLPRGAHVQRMRRISPEDPEASIQVDVPSSAGAGAGIAVVDDLKERIRRLESLVDSMRSPTSQISNLDQQSRDIIELTPNELDDDSSSTHNQATIHLGDGSLRVLGLSGPSGLDVGWTSIIKDKDISIQLCQVYLLNVDPVIKILHRPSVERWMLQGERYLGFSERHSAVDALGAAICYAAATSLTETQSWARFHATKSSIVSRARRACEAALEKSNLLVSPEVTTLQAFVLYLVARRSEDPSRAVWTLMAFAVRIAKALDLPGGADETFFSQQMRKRLWLTICLLDFQTSLSRPSEPLISVAEATSSFAPPKHINDSDFGPKSSHDISDREGLTDTTFSMVSYHVQAAGRLLNFESSSTDKEILQQHVQQFEQKTLRLLFYCDPESTPYAWFTWHRIQCFVTGARLSAIRPLRHQHRGSTGHLMPSLDTNGSASTLSLALNILEKVQLVHTDPRGEGFRWFVTVPWQPLAVAISECYVCQDKTLIQRALPIVEAAFQQHKAAVSGTSKAISTTLERLMCHVREKLSPTLCTSISLTASPAFEIANIPSTLSVPHTPPSRSSITSNGDLLSNWPWPAPDLPHNGPDIASATEAAPISTSLQKLDPLLLSLDSQLVIAGQEPLMENDQSWAAWEEVIAGLHDGETTRPNMFLS</sequence>
<organism>
    <name type="scientific">Arthroderma gypseum (strain ATCC MYA-4604 / CBS 118893)</name>
    <name type="common">Microsporum gypseum</name>
    <dbReference type="NCBI Taxonomy" id="535722"/>
    <lineage>
        <taxon>Eukaryota</taxon>
        <taxon>Fungi</taxon>
        <taxon>Dikarya</taxon>
        <taxon>Ascomycota</taxon>
        <taxon>Pezizomycotina</taxon>
        <taxon>Eurotiomycetes</taxon>
        <taxon>Eurotiomycetidae</taxon>
        <taxon>Onygenales</taxon>
        <taxon>Arthrodermataceae</taxon>
        <taxon>Nannizzia</taxon>
    </lineage>
</organism>
<name>NSCR_ARTGP</name>
<comment type="function">
    <text evidence="3">Transcription factor that specifically regulates the neosartoricin B biosynthesis gene cluster (PubMed:23758576).</text>
</comment>
<comment type="subcellular location">
    <subcellularLocation>
        <location evidence="1">Nucleus</location>
    </subcellularLocation>
</comment>
<feature type="chain" id="PRO_0000437930" description="C6 finger domain transcription factor nscR">
    <location>
        <begin position="1"/>
        <end position="701"/>
    </location>
</feature>
<feature type="DNA-binding region" description="Zn(2)-C6 fungal-type" evidence="1">
    <location>
        <begin position="17"/>
        <end position="43"/>
    </location>
</feature>